<protein>
    <recommendedName>
        <fullName evidence="1">Demethylmenaquinone methyltransferase</fullName>
        <ecNumber evidence="1">2.1.1.163</ecNumber>
    </recommendedName>
</protein>
<accession>Q65I24</accession>
<accession>Q62TH2</accession>
<gene>
    <name evidence="1" type="primary">menG</name>
    <name type="ordered locus">BLi02410</name>
    <name type="ordered locus">BL02783</name>
</gene>
<evidence type="ECO:0000255" key="1">
    <source>
        <dbReference type="HAMAP-Rule" id="MF_01813"/>
    </source>
</evidence>
<reference key="1">
    <citation type="journal article" date="2004" name="J. Mol. Microbiol. Biotechnol.">
        <title>The complete genome sequence of Bacillus licheniformis DSM13, an organism with great industrial potential.</title>
        <authorList>
            <person name="Veith B."/>
            <person name="Herzberg C."/>
            <person name="Steckel S."/>
            <person name="Feesche J."/>
            <person name="Maurer K.H."/>
            <person name="Ehrenreich P."/>
            <person name="Baeumer S."/>
            <person name="Henne A."/>
            <person name="Liesegang H."/>
            <person name="Merkl R."/>
            <person name="Ehrenreich A."/>
            <person name="Gottschalk G."/>
        </authorList>
    </citation>
    <scope>NUCLEOTIDE SEQUENCE [LARGE SCALE GENOMIC DNA]</scope>
    <source>
        <strain>ATCC 14580 / DSM 13 / JCM 2505 / CCUG 7422 / NBRC 12200 / NCIMB 9375 / NCTC 10341 / NRRL NRS-1264 / Gibson 46</strain>
    </source>
</reference>
<reference key="2">
    <citation type="journal article" date="2004" name="Genome Biol.">
        <title>Complete genome sequence of the industrial bacterium Bacillus licheniformis and comparisons with closely related Bacillus species.</title>
        <authorList>
            <person name="Rey M.W."/>
            <person name="Ramaiya P."/>
            <person name="Nelson B.A."/>
            <person name="Brody-Karpin S.D."/>
            <person name="Zaretsky E.J."/>
            <person name="Tang M."/>
            <person name="Lopez de Leon A."/>
            <person name="Xiang H."/>
            <person name="Gusti V."/>
            <person name="Clausen I.G."/>
            <person name="Olsen P.B."/>
            <person name="Rasmussen M.D."/>
            <person name="Andersen J.T."/>
            <person name="Joergensen P.L."/>
            <person name="Larsen T.S."/>
            <person name="Sorokin A."/>
            <person name="Bolotin A."/>
            <person name="Lapidus A."/>
            <person name="Galleron N."/>
            <person name="Ehrlich S.D."/>
            <person name="Berka R.M."/>
        </authorList>
    </citation>
    <scope>NUCLEOTIDE SEQUENCE [LARGE SCALE GENOMIC DNA]</scope>
    <source>
        <strain>ATCC 14580 / DSM 13 / JCM 2505 / CCUG 7422 / NBRC 12200 / NCIMB 9375 / NCTC 10341 / NRRL NRS-1264 / Gibson 46</strain>
    </source>
</reference>
<keyword id="KW-0474">Menaquinone biosynthesis</keyword>
<keyword id="KW-0489">Methyltransferase</keyword>
<keyword id="KW-1185">Reference proteome</keyword>
<keyword id="KW-0949">S-adenosyl-L-methionine</keyword>
<keyword id="KW-0808">Transferase</keyword>
<sequence>MVQSKEQRVHGVFEKIYKNYDQMNSVISFKQHKKWRDKTMQLMNVPKGATALDVCCGTGDWTIALADAAGETGEIKGLDFSKNMLSIAEQKTESYSQIELIHGNAMELPFPDNTFDYVTIGFGLRNVPDYLTVLKEMARVVKPGGQVVCLETSQPEMFGFKQLYFLYFRFIMPMFGKLFAKSFKEYSWLQESAREFPGMKELAALFEEAGLKNVQYHPFTGGVAATHVGWKR</sequence>
<dbReference type="EC" id="2.1.1.163" evidence="1"/>
<dbReference type="EMBL" id="CP000002">
    <property type="protein sequence ID" value="AAU23937.1"/>
    <property type="molecule type" value="Genomic_DNA"/>
</dbReference>
<dbReference type="EMBL" id="AE017333">
    <property type="protein sequence ID" value="AAU41290.1"/>
    <property type="molecule type" value="Genomic_DNA"/>
</dbReference>
<dbReference type="RefSeq" id="WP_003182998.1">
    <property type="nucleotide sequence ID" value="NC_006322.1"/>
</dbReference>
<dbReference type="SMR" id="Q65I24"/>
<dbReference type="STRING" id="279010.BL02783"/>
<dbReference type="KEGG" id="bld:BLi02410"/>
<dbReference type="KEGG" id="bli:BL02783"/>
<dbReference type="eggNOG" id="COG2226">
    <property type="taxonomic scope" value="Bacteria"/>
</dbReference>
<dbReference type="HOGENOM" id="CLU_037990_0_0_9"/>
<dbReference type="UniPathway" id="UPA00079">
    <property type="reaction ID" value="UER00169"/>
</dbReference>
<dbReference type="Proteomes" id="UP000000606">
    <property type="component" value="Chromosome"/>
</dbReference>
<dbReference type="Bgee" id="BL02783">
    <property type="expression patterns" value="Expressed in ovary and 12 other cell types or tissues"/>
</dbReference>
<dbReference type="GO" id="GO:0043770">
    <property type="term" value="F:demethylmenaquinone methyltransferase activity"/>
    <property type="evidence" value="ECO:0007669"/>
    <property type="project" value="UniProtKB-UniRule"/>
</dbReference>
<dbReference type="GO" id="GO:0009234">
    <property type="term" value="P:menaquinone biosynthetic process"/>
    <property type="evidence" value="ECO:0007669"/>
    <property type="project" value="UniProtKB-UniRule"/>
</dbReference>
<dbReference type="GO" id="GO:0032259">
    <property type="term" value="P:methylation"/>
    <property type="evidence" value="ECO:0007669"/>
    <property type="project" value="UniProtKB-KW"/>
</dbReference>
<dbReference type="CDD" id="cd02440">
    <property type="entry name" value="AdoMet_MTases"/>
    <property type="match status" value="1"/>
</dbReference>
<dbReference type="FunFam" id="3.40.50.150:FF:000086">
    <property type="entry name" value="Demethylmenaquinone methyltransferase"/>
    <property type="match status" value="1"/>
</dbReference>
<dbReference type="Gene3D" id="3.40.50.150">
    <property type="entry name" value="Vaccinia Virus protein VP39"/>
    <property type="match status" value="1"/>
</dbReference>
<dbReference type="HAMAP" id="MF_01813">
    <property type="entry name" value="MenG_UbiE_methyltr"/>
    <property type="match status" value="1"/>
</dbReference>
<dbReference type="InterPro" id="IPR014122">
    <property type="entry name" value="MenG_heptapren"/>
</dbReference>
<dbReference type="InterPro" id="IPR029063">
    <property type="entry name" value="SAM-dependent_MTases_sf"/>
</dbReference>
<dbReference type="InterPro" id="IPR004033">
    <property type="entry name" value="UbiE/COQ5_MeTrFase"/>
</dbReference>
<dbReference type="InterPro" id="IPR023576">
    <property type="entry name" value="UbiE/COQ5_MeTrFase_CS"/>
</dbReference>
<dbReference type="NCBIfam" id="TIGR02752">
    <property type="entry name" value="MenG_heptapren"/>
    <property type="match status" value="1"/>
</dbReference>
<dbReference type="NCBIfam" id="TIGR01934">
    <property type="entry name" value="MenG_MenH_UbiE"/>
    <property type="match status" value="1"/>
</dbReference>
<dbReference type="NCBIfam" id="NF001243">
    <property type="entry name" value="PRK00216.1-4"/>
    <property type="match status" value="1"/>
</dbReference>
<dbReference type="NCBIfam" id="NF001244">
    <property type="entry name" value="PRK00216.1-5"/>
    <property type="match status" value="1"/>
</dbReference>
<dbReference type="PANTHER" id="PTHR43591:SF24">
    <property type="entry name" value="2-METHOXY-6-POLYPRENYL-1,4-BENZOQUINOL METHYLASE, MITOCHONDRIAL"/>
    <property type="match status" value="1"/>
</dbReference>
<dbReference type="PANTHER" id="PTHR43591">
    <property type="entry name" value="METHYLTRANSFERASE"/>
    <property type="match status" value="1"/>
</dbReference>
<dbReference type="Pfam" id="PF01209">
    <property type="entry name" value="Ubie_methyltran"/>
    <property type="match status" value="1"/>
</dbReference>
<dbReference type="SUPFAM" id="SSF53335">
    <property type="entry name" value="S-adenosyl-L-methionine-dependent methyltransferases"/>
    <property type="match status" value="1"/>
</dbReference>
<dbReference type="PROSITE" id="PS51608">
    <property type="entry name" value="SAM_MT_UBIE"/>
    <property type="match status" value="1"/>
</dbReference>
<dbReference type="PROSITE" id="PS01183">
    <property type="entry name" value="UBIE_1"/>
    <property type="match status" value="1"/>
</dbReference>
<dbReference type="PROSITE" id="PS01184">
    <property type="entry name" value="UBIE_2"/>
    <property type="match status" value="1"/>
</dbReference>
<feature type="chain" id="PRO_1000056218" description="Demethylmenaquinone methyltransferase">
    <location>
        <begin position="1"/>
        <end position="232"/>
    </location>
</feature>
<feature type="binding site" evidence="1">
    <location>
        <position position="58"/>
    </location>
    <ligand>
        <name>S-adenosyl-L-methionine</name>
        <dbReference type="ChEBI" id="CHEBI:59789"/>
    </ligand>
</feature>
<feature type="binding site" evidence="1">
    <location>
        <position position="79"/>
    </location>
    <ligand>
        <name>S-adenosyl-L-methionine</name>
        <dbReference type="ChEBI" id="CHEBI:59789"/>
    </ligand>
</feature>
<feature type="binding site" evidence="1">
    <location>
        <begin position="104"/>
        <end position="105"/>
    </location>
    <ligand>
        <name>S-adenosyl-L-methionine</name>
        <dbReference type="ChEBI" id="CHEBI:59789"/>
    </ligand>
</feature>
<comment type="function">
    <text evidence="1">Methyltransferase required for the conversion of demethylmenaquinol (DMKH2) to menaquinol (MKH2).</text>
</comment>
<comment type="catalytic activity">
    <reaction evidence="1">
        <text>a 2-demethylmenaquinol + S-adenosyl-L-methionine = a menaquinol + S-adenosyl-L-homocysteine + H(+)</text>
        <dbReference type="Rhea" id="RHEA:42640"/>
        <dbReference type="Rhea" id="RHEA-COMP:9539"/>
        <dbReference type="Rhea" id="RHEA-COMP:9563"/>
        <dbReference type="ChEBI" id="CHEBI:15378"/>
        <dbReference type="ChEBI" id="CHEBI:18151"/>
        <dbReference type="ChEBI" id="CHEBI:55437"/>
        <dbReference type="ChEBI" id="CHEBI:57856"/>
        <dbReference type="ChEBI" id="CHEBI:59789"/>
        <dbReference type="EC" id="2.1.1.163"/>
    </reaction>
</comment>
<comment type="pathway">
    <text evidence="1">Quinol/quinone metabolism; menaquinone biosynthesis; menaquinol from 1,4-dihydroxy-2-naphthoate: step 2/2.</text>
</comment>
<comment type="similarity">
    <text evidence="1">Belongs to the class I-like SAM-binding methyltransferase superfamily. MenG/UbiE family.</text>
</comment>
<name>MENG_BACLD</name>
<proteinExistence type="inferred from homology"/>
<organism>
    <name type="scientific">Bacillus licheniformis (strain ATCC 14580 / DSM 13 / JCM 2505 / CCUG 7422 / NBRC 12200 / NCIMB 9375 / NCTC 10341 / NRRL NRS-1264 / Gibson 46)</name>
    <dbReference type="NCBI Taxonomy" id="279010"/>
    <lineage>
        <taxon>Bacteria</taxon>
        <taxon>Bacillati</taxon>
        <taxon>Bacillota</taxon>
        <taxon>Bacilli</taxon>
        <taxon>Bacillales</taxon>
        <taxon>Bacillaceae</taxon>
        <taxon>Bacillus</taxon>
    </lineage>
</organism>